<accession>P17959</accession>
<evidence type="ECO:0000255" key="1">
    <source>
        <dbReference type="PROSITE-ProRule" id="PRU00182"/>
    </source>
</evidence>
<evidence type="ECO:0000256" key="2">
    <source>
        <dbReference type="SAM" id="MobiDB-lite"/>
    </source>
</evidence>
<evidence type="ECO:0000305" key="3"/>
<protein>
    <recommendedName>
        <fullName evidence="3">Small ribosomal subunit protein uS4</fullName>
    </recommendedName>
    <alternativeName>
        <fullName evidence="3">40S ribosomal protein S9</fullName>
    </alternativeName>
</protein>
<dbReference type="EMBL" id="X52586">
    <property type="protein sequence ID" value="CAA36818.1"/>
    <property type="molecule type" value="Genomic_DNA"/>
</dbReference>
<dbReference type="PIR" id="S12674">
    <property type="entry name" value="S12674"/>
</dbReference>
<dbReference type="PDB" id="8OVA">
    <property type="method" value="EM"/>
    <property type="resolution" value="2.47 A"/>
    <property type="chains" value="A6=1-190"/>
</dbReference>
<dbReference type="PDB" id="8OVE">
    <property type="method" value="EM"/>
    <property type="resolution" value="2.60 A"/>
    <property type="chains" value="A6=1-190"/>
</dbReference>
<dbReference type="PDBsum" id="8OVA"/>
<dbReference type="PDBsum" id="8OVE"/>
<dbReference type="EMDB" id="EMD-17208"/>
<dbReference type="EMDB" id="EMD-17212"/>
<dbReference type="SMR" id="P17959"/>
<dbReference type="OMA" id="RQFITHG"/>
<dbReference type="GO" id="GO:0097014">
    <property type="term" value="C:ciliary plasm"/>
    <property type="evidence" value="ECO:0000314"/>
    <property type="project" value="GeneDB"/>
</dbReference>
<dbReference type="GO" id="GO:0005737">
    <property type="term" value="C:cytoplasm"/>
    <property type="evidence" value="ECO:0000314"/>
    <property type="project" value="GeneDB"/>
</dbReference>
<dbReference type="GO" id="GO:0022627">
    <property type="term" value="C:cytosolic small ribosomal subunit"/>
    <property type="evidence" value="ECO:0007669"/>
    <property type="project" value="TreeGrafter"/>
</dbReference>
<dbReference type="GO" id="GO:0031981">
    <property type="term" value="C:nuclear lumen"/>
    <property type="evidence" value="ECO:0000314"/>
    <property type="project" value="GeneDB"/>
</dbReference>
<dbReference type="GO" id="GO:0005730">
    <property type="term" value="C:nucleolus"/>
    <property type="evidence" value="ECO:0000314"/>
    <property type="project" value="GeneDB"/>
</dbReference>
<dbReference type="GO" id="GO:0005840">
    <property type="term" value="C:ribosome"/>
    <property type="evidence" value="ECO:0000255"/>
    <property type="project" value="GeneDB"/>
</dbReference>
<dbReference type="GO" id="GO:0003723">
    <property type="term" value="F:RNA binding"/>
    <property type="evidence" value="ECO:0000255"/>
    <property type="project" value="GeneDB"/>
</dbReference>
<dbReference type="GO" id="GO:0019843">
    <property type="term" value="F:rRNA binding"/>
    <property type="evidence" value="ECO:0007669"/>
    <property type="project" value="UniProtKB-KW"/>
</dbReference>
<dbReference type="GO" id="GO:0003735">
    <property type="term" value="F:structural constituent of ribosome"/>
    <property type="evidence" value="ECO:0007669"/>
    <property type="project" value="InterPro"/>
</dbReference>
<dbReference type="GO" id="GO:0042274">
    <property type="term" value="P:ribosomal small subunit biogenesis"/>
    <property type="evidence" value="ECO:0007669"/>
    <property type="project" value="TreeGrafter"/>
</dbReference>
<dbReference type="GO" id="GO:0006412">
    <property type="term" value="P:translation"/>
    <property type="evidence" value="ECO:0007669"/>
    <property type="project" value="InterPro"/>
</dbReference>
<dbReference type="CDD" id="cd00165">
    <property type="entry name" value="S4"/>
    <property type="match status" value="1"/>
</dbReference>
<dbReference type="FunFam" id="3.10.290.10:FF:000023">
    <property type="entry name" value="40S ribosomal protein S9"/>
    <property type="match status" value="1"/>
</dbReference>
<dbReference type="Gene3D" id="3.10.290.10">
    <property type="entry name" value="RNA-binding S4 domain"/>
    <property type="match status" value="1"/>
</dbReference>
<dbReference type="InterPro" id="IPR022801">
    <property type="entry name" value="Ribosomal_uS4"/>
</dbReference>
<dbReference type="InterPro" id="IPR018079">
    <property type="entry name" value="Ribosomal_uS4_CS"/>
</dbReference>
<dbReference type="InterPro" id="IPR005710">
    <property type="entry name" value="Ribosomal_uS4_euk/arc"/>
</dbReference>
<dbReference type="InterPro" id="IPR001912">
    <property type="entry name" value="Ribosomal_uS4_N"/>
</dbReference>
<dbReference type="InterPro" id="IPR002942">
    <property type="entry name" value="S4_RNA-bd"/>
</dbReference>
<dbReference type="InterPro" id="IPR036986">
    <property type="entry name" value="S4_RNA-bd_sf"/>
</dbReference>
<dbReference type="NCBIfam" id="NF003139">
    <property type="entry name" value="PRK04051.1"/>
    <property type="match status" value="1"/>
</dbReference>
<dbReference type="NCBIfam" id="TIGR01018">
    <property type="entry name" value="uS4_arch"/>
    <property type="match status" value="1"/>
</dbReference>
<dbReference type="PANTHER" id="PTHR11831">
    <property type="entry name" value="30S 40S RIBOSOMAL PROTEIN"/>
    <property type="match status" value="1"/>
</dbReference>
<dbReference type="PANTHER" id="PTHR11831:SF5">
    <property type="entry name" value="40S RIBOSOMAL PROTEIN S9"/>
    <property type="match status" value="1"/>
</dbReference>
<dbReference type="Pfam" id="PF00163">
    <property type="entry name" value="Ribosomal_S4"/>
    <property type="match status" value="1"/>
</dbReference>
<dbReference type="Pfam" id="PF01479">
    <property type="entry name" value="S4"/>
    <property type="match status" value="1"/>
</dbReference>
<dbReference type="SMART" id="SM01390">
    <property type="entry name" value="Ribosomal_S4"/>
    <property type="match status" value="1"/>
</dbReference>
<dbReference type="SMART" id="SM00363">
    <property type="entry name" value="S4"/>
    <property type="match status" value="1"/>
</dbReference>
<dbReference type="SUPFAM" id="SSF55174">
    <property type="entry name" value="Alpha-L RNA-binding motif"/>
    <property type="match status" value="1"/>
</dbReference>
<dbReference type="PROSITE" id="PS00632">
    <property type="entry name" value="RIBOSOMAL_S4"/>
    <property type="match status" value="1"/>
</dbReference>
<dbReference type="PROSITE" id="PS50889">
    <property type="entry name" value="S4"/>
    <property type="match status" value="1"/>
</dbReference>
<reference key="1">
    <citation type="journal article" date="1990" name="Nucleic Acids Res.">
        <title>The genes encoding fructose bisphosphate aldolase in Trypanosoma brucei are interspersed with unrelated genes.</title>
        <authorList>
            <person name="Vijayasarathy S."/>
            <person name="Ernest I."/>
            <person name="Itzhaki J."/>
            <person name="Sherman D."/>
            <person name="Mowatt M.R."/>
            <person name="Michels P.A.M."/>
            <person name="Clayton C.E."/>
        </authorList>
    </citation>
    <scope>NUCLEOTIDE SEQUENCE [GENOMIC DNA]</scope>
    <source>
        <strain>427</strain>
    </source>
</reference>
<sequence length="190" mass="22052">MRNYNNFNRVWKAPRRPFEKERLDREMKLCGQYGLRCKREIWRVNMTLSKMRRTARLLLTLPENHPRRLLEGSAIMRRCHGYGFLDEDKDKLDYVLSLTVPDILERRLQTVVFKHGLAKSVHHSRVLIQQRHIAVAKQIVTIPSFIVRVSSEHHIAFADASPFGNGRPGRVKRVKRNAAKKGSGGGDDDE</sequence>
<feature type="chain" id="PRO_0000132699" description="Small ribosomal subunit protein uS4">
    <location>
        <begin position="1"/>
        <end position="190"/>
    </location>
</feature>
<feature type="domain" description="S4 RNA-binding" evidence="1">
    <location>
        <begin position="106"/>
        <end position="178"/>
    </location>
</feature>
<feature type="region of interest" description="Disordered" evidence="2">
    <location>
        <begin position="166"/>
        <end position="190"/>
    </location>
</feature>
<feature type="compositionally biased region" description="Basic residues" evidence="2">
    <location>
        <begin position="169"/>
        <end position="179"/>
    </location>
</feature>
<proteinExistence type="evidence at protein level"/>
<keyword id="KW-0002">3D-structure</keyword>
<keyword id="KW-0687">Ribonucleoprotein</keyword>
<keyword id="KW-0689">Ribosomal protein</keyword>
<keyword id="KW-0694">RNA-binding</keyword>
<keyword id="KW-0699">rRNA-binding</keyword>
<name>RS9_TRYBB</name>
<comment type="similarity">
    <text evidence="3">Belongs to the universal ribosomal protein uS4 family.</text>
</comment>
<organism>
    <name type="scientific">Trypanosoma brucei brucei</name>
    <dbReference type="NCBI Taxonomy" id="5702"/>
    <lineage>
        <taxon>Eukaryota</taxon>
        <taxon>Discoba</taxon>
        <taxon>Euglenozoa</taxon>
        <taxon>Kinetoplastea</taxon>
        <taxon>Metakinetoplastina</taxon>
        <taxon>Trypanosomatida</taxon>
        <taxon>Trypanosomatidae</taxon>
        <taxon>Trypanosoma</taxon>
    </lineage>
</organism>